<keyword id="KW-0004">4Fe-4S</keyword>
<keyword id="KW-0963">Cytoplasm</keyword>
<keyword id="KW-0408">Iron</keyword>
<keyword id="KW-0411">Iron-sulfur</keyword>
<keyword id="KW-0479">Metal-binding</keyword>
<keyword id="KW-1185">Reference proteome</keyword>
<keyword id="KW-0949">S-adenosyl-L-methionine</keyword>
<keyword id="KW-0808">Transferase</keyword>
<protein>
    <recommendedName>
        <fullName evidence="1">Lipoyl synthase</fullName>
        <ecNumber evidence="1">2.8.1.8</ecNumber>
    </recommendedName>
    <alternativeName>
        <fullName evidence="1">Lip-syn</fullName>
        <shortName evidence="1">LS</shortName>
    </alternativeName>
    <alternativeName>
        <fullName evidence="1">Lipoate synthase</fullName>
    </alternativeName>
    <alternativeName>
        <fullName evidence="1">Lipoic acid synthase</fullName>
    </alternativeName>
    <alternativeName>
        <fullName evidence="1">Sulfur insertion protein LipA</fullName>
    </alternativeName>
</protein>
<feature type="chain" id="PRO_0000325265" description="Lipoyl synthase">
    <location>
        <begin position="1"/>
        <end position="322"/>
    </location>
</feature>
<feature type="domain" description="Radical SAM core" evidence="2">
    <location>
        <begin position="80"/>
        <end position="298"/>
    </location>
</feature>
<feature type="binding site" evidence="1">
    <location>
        <position position="68"/>
    </location>
    <ligand>
        <name>[4Fe-4S] cluster</name>
        <dbReference type="ChEBI" id="CHEBI:49883"/>
        <label>1</label>
    </ligand>
</feature>
<feature type="binding site" evidence="1">
    <location>
        <position position="73"/>
    </location>
    <ligand>
        <name>[4Fe-4S] cluster</name>
        <dbReference type="ChEBI" id="CHEBI:49883"/>
        <label>1</label>
    </ligand>
</feature>
<feature type="binding site" evidence="1">
    <location>
        <position position="79"/>
    </location>
    <ligand>
        <name>[4Fe-4S] cluster</name>
        <dbReference type="ChEBI" id="CHEBI:49883"/>
        <label>1</label>
    </ligand>
</feature>
<feature type="binding site" evidence="1">
    <location>
        <position position="94"/>
    </location>
    <ligand>
        <name>[4Fe-4S] cluster</name>
        <dbReference type="ChEBI" id="CHEBI:49883"/>
        <label>2</label>
        <note>4Fe-4S-S-AdoMet</note>
    </ligand>
</feature>
<feature type="binding site" evidence="1">
    <location>
        <position position="98"/>
    </location>
    <ligand>
        <name>[4Fe-4S] cluster</name>
        <dbReference type="ChEBI" id="CHEBI:49883"/>
        <label>2</label>
        <note>4Fe-4S-S-AdoMet</note>
    </ligand>
</feature>
<feature type="binding site" evidence="1">
    <location>
        <position position="101"/>
    </location>
    <ligand>
        <name>[4Fe-4S] cluster</name>
        <dbReference type="ChEBI" id="CHEBI:49883"/>
        <label>2</label>
        <note>4Fe-4S-S-AdoMet</note>
    </ligand>
</feature>
<feature type="binding site" evidence="1">
    <location>
        <position position="309"/>
    </location>
    <ligand>
        <name>[4Fe-4S] cluster</name>
        <dbReference type="ChEBI" id="CHEBI:49883"/>
        <label>1</label>
    </ligand>
</feature>
<reference key="1">
    <citation type="journal article" date="2004" name="Proc. Natl. Acad. Sci. U.S.A.">
        <title>Genome sequence of the deep-sea gamma-proteobacterium Idiomarina loihiensis reveals amino acid fermentation as a source of carbon and energy.</title>
        <authorList>
            <person name="Hou S."/>
            <person name="Saw J.H."/>
            <person name="Lee K.S."/>
            <person name="Freitas T.A."/>
            <person name="Belisle C."/>
            <person name="Kawarabayasi Y."/>
            <person name="Donachie S.P."/>
            <person name="Pikina A."/>
            <person name="Galperin M.Y."/>
            <person name="Koonin E.V."/>
            <person name="Makarova K.S."/>
            <person name="Omelchenko M.V."/>
            <person name="Sorokin A."/>
            <person name="Wolf Y.I."/>
            <person name="Li Q.X."/>
            <person name="Keum Y.S."/>
            <person name="Campbell S."/>
            <person name="Denery J."/>
            <person name="Aizawa S."/>
            <person name="Shibata S."/>
            <person name="Malahoff A."/>
            <person name="Alam M."/>
        </authorList>
    </citation>
    <scope>NUCLEOTIDE SEQUENCE [LARGE SCALE GENOMIC DNA]</scope>
    <source>
        <strain>ATCC BAA-735 / DSM 15497 / L2-TR</strain>
    </source>
</reference>
<dbReference type="EC" id="2.8.1.8" evidence="1"/>
<dbReference type="EMBL" id="AE017340">
    <property type="protein sequence ID" value="AAV81800.1"/>
    <property type="status" value="ALT_INIT"/>
    <property type="molecule type" value="Genomic_DNA"/>
</dbReference>
<dbReference type="RefSeq" id="WP_016341310.1">
    <property type="nucleotide sequence ID" value="NC_006512.1"/>
</dbReference>
<dbReference type="SMR" id="Q5QYE5"/>
<dbReference type="STRING" id="283942.IL0960"/>
<dbReference type="GeneID" id="41336120"/>
<dbReference type="KEGG" id="ilo:IL0960"/>
<dbReference type="eggNOG" id="COG0320">
    <property type="taxonomic scope" value="Bacteria"/>
</dbReference>
<dbReference type="HOGENOM" id="CLU_033144_2_1_6"/>
<dbReference type="OrthoDB" id="9787898at2"/>
<dbReference type="UniPathway" id="UPA00538">
    <property type="reaction ID" value="UER00593"/>
</dbReference>
<dbReference type="Proteomes" id="UP000001171">
    <property type="component" value="Chromosome"/>
</dbReference>
<dbReference type="GO" id="GO:0005737">
    <property type="term" value="C:cytoplasm"/>
    <property type="evidence" value="ECO:0007669"/>
    <property type="project" value="UniProtKB-SubCell"/>
</dbReference>
<dbReference type="GO" id="GO:0051539">
    <property type="term" value="F:4 iron, 4 sulfur cluster binding"/>
    <property type="evidence" value="ECO:0007669"/>
    <property type="project" value="UniProtKB-UniRule"/>
</dbReference>
<dbReference type="GO" id="GO:0016992">
    <property type="term" value="F:lipoate synthase activity"/>
    <property type="evidence" value="ECO:0007669"/>
    <property type="project" value="UniProtKB-UniRule"/>
</dbReference>
<dbReference type="GO" id="GO:0046872">
    <property type="term" value="F:metal ion binding"/>
    <property type="evidence" value="ECO:0007669"/>
    <property type="project" value="UniProtKB-KW"/>
</dbReference>
<dbReference type="CDD" id="cd01335">
    <property type="entry name" value="Radical_SAM"/>
    <property type="match status" value="1"/>
</dbReference>
<dbReference type="FunFam" id="3.20.20.70:FF:000023">
    <property type="entry name" value="Lipoyl synthase"/>
    <property type="match status" value="1"/>
</dbReference>
<dbReference type="Gene3D" id="3.20.20.70">
    <property type="entry name" value="Aldolase class I"/>
    <property type="match status" value="1"/>
</dbReference>
<dbReference type="HAMAP" id="MF_00206">
    <property type="entry name" value="Lipoyl_synth"/>
    <property type="match status" value="1"/>
</dbReference>
<dbReference type="InterPro" id="IPR013785">
    <property type="entry name" value="Aldolase_TIM"/>
</dbReference>
<dbReference type="InterPro" id="IPR006638">
    <property type="entry name" value="Elp3/MiaA/NifB-like_rSAM"/>
</dbReference>
<dbReference type="InterPro" id="IPR031691">
    <property type="entry name" value="LIAS_N"/>
</dbReference>
<dbReference type="InterPro" id="IPR003698">
    <property type="entry name" value="Lipoyl_synth"/>
</dbReference>
<dbReference type="InterPro" id="IPR007197">
    <property type="entry name" value="rSAM"/>
</dbReference>
<dbReference type="NCBIfam" id="TIGR00510">
    <property type="entry name" value="lipA"/>
    <property type="match status" value="1"/>
</dbReference>
<dbReference type="NCBIfam" id="NF004019">
    <property type="entry name" value="PRK05481.1"/>
    <property type="match status" value="1"/>
</dbReference>
<dbReference type="NCBIfam" id="NF009544">
    <property type="entry name" value="PRK12928.1"/>
    <property type="match status" value="1"/>
</dbReference>
<dbReference type="PANTHER" id="PTHR10949">
    <property type="entry name" value="LIPOYL SYNTHASE"/>
    <property type="match status" value="1"/>
</dbReference>
<dbReference type="PANTHER" id="PTHR10949:SF0">
    <property type="entry name" value="LIPOYL SYNTHASE, MITOCHONDRIAL"/>
    <property type="match status" value="1"/>
</dbReference>
<dbReference type="Pfam" id="PF16881">
    <property type="entry name" value="LIAS_N"/>
    <property type="match status" value="1"/>
</dbReference>
<dbReference type="Pfam" id="PF04055">
    <property type="entry name" value="Radical_SAM"/>
    <property type="match status" value="1"/>
</dbReference>
<dbReference type="PIRSF" id="PIRSF005963">
    <property type="entry name" value="Lipoyl_synth"/>
    <property type="match status" value="1"/>
</dbReference>
<dbReference type="SFLD" id="SFLDF00271">
    <property type="entry name" value="lipoyl_synthase"/>
    <property type="match status" value="1"/>
</dbReference>
<dbReference type="SFLD" id="SFLDG01058">
    <property type="entry name" value="lipoyl_synthase_like"/>
    <property type="match status" value="1"/>
</dbReference>
<dbReference type="SMART" id="SM00729">
    <property type="entry name" value="Elp3"/>
    <property type="match status" value="1"/>
</dbReference>
<dbReference type="SUPFAM" id="SSF102114">
    <property type="entry name" value="Radical SAM enzymes"/>
    <property type="match status" value="1"/>
</dbReference>
<dbReference type="PROSITE" id="PS51918">
    <property type="entry name" value="RADICAL_SAM"/>
    <property type="match status" value="1"/>
</dbReference>
<comment type="function">
    <text evidence="1">Catalyzes the radical-mediated insertion of two sulfur atoms into the C-6 and C-8 positions of the octanoyl moiety bound to the lipoyl domains of lipoate-dependent enzymes, thereby converting the octanoylated domains into lipoylated derivatives.</text>
</comment>
<comment type="catalytic activity">
    <reaction evidence="1">
        <text>[[Fe-S] cluster scaffold protein carrying a second [4Fe-4S](2+) cluster] + N(6)-octanoyl-L-lysyl-[protein] + 2 oxidized [2Fe-2S]-[ferredoxin] + 2 S-adenosyl-L-methionine + 4 H(+) = [[Fe-S] cluster scaffold protein] + N(6)-[(R)-dihydrolipoyl]-L-lysyl-[protein] + 4 Fe(3+) + 2 hydrogen sulfide + 2 5'-deoxyadenosine + 2 L-methionine + 2 reduced [2Fe-2S]-[ferredoxin]</text>
        <dbReference type="Rhea" id="RHEA:16585"/>
        <dbReference type="Rhea" id="RHEA-COMP:9928"/>
        <dbReference type="Rhea" id="RHEA-COMP:10000"/>
        <dbReference type="Rhea" id="RHEA-COMP:10001"/>
        <dbReference type="Rhea" id="RHEA-COMP:10475"/>
        <dbReference type="Rhea" id="RHEA-COMP:14568"/>
        <dbReference type="Rhea" id="RHEA-COMP:14569"/>
        <dbReference type="ChEBI" id="CHEBI:15378"/>
        <dbReference type="ChEBI" id="CHEBI:17319"/>
        <dbReference type="ChEBI" id="CHEBI:29034"/>
        <dbReference type="ChEBI" id="CHEBI:29919"/>
        <dbReference type="ChEBI" id="CHEBI:33722"/>
        <dbReference type="ChEBI" id="CHEBI:33737"/>
        <dbReference type="ChEBI" id="CHEBI:33738"/>
        <dbReference type="ChEBI" id="CHEBI:57844"/>
        <dbReference type="ChEBI" id="CHEBI:59789"/>
        <dbReference type="ChEBI" id="CHEBI:78809"/>
        <dbReference type="ChEBI" id="CHEBI:83100"/>
        <dbReference type="EC" id="2.8.1.8"/>
    </reaction>
</comment>
<comment type="cofactor">
    <cofactor evidence="1">
        <name>[4Fe-4S] cluster</name>
        <dbReference type="ChEBI" id="CHEBI:49883"/>
    </cofactor>
    <text evidence="1">Binds 2 [4Fe-4S] clusters per subunit. One cluster is coordinated with 3 cysteines and an exchangeable S-adenosyl-L-methionine.</text>
</comment>
<comment type="pathway">
    <text evidence="1">Protein modification; protein lipoylation via endogenous pathway; protein N(6)-(lipoyl)lysine from octanoyl-[acyl-carrier-protein]: step 2/2.</text>
</comment>
<comment type="subcellular location">
    <subcellularLocation>
        <location evidence="1">Cytoplasm</location>
    </subcellularLocation>
</comment>
<comment type="similarity">
    <text evidence="1">Belongs to the radical SAM superfamily. Lipoyl synthase family.</text>
</comment>
<comment type="sequence caution" evidence="3">
    <conflict type="erroneous initiation">
        <sequence resource="EMBL-CDS" id="AAV81800"/>
    </conflict>
</comment>
<gene>
    <name evidence="1" type="primary">lipA</name>
    <name type="ordered locus">IL0960</name>
</gene>
<sequence>MSKPVRVEPGVKMRDADKMALIPVQIIPTERDQMLRKPSWLKVKLPSSTERIDEIKQAMRSHGLHSVCEEASCPNLPECFNHGTASFMILGDICTRRCPFCDVAHGRPLPPDPEEAEKLGKTIRDMKVKYVVITSVDRDDLRDGGAQHFADCIREIREHSENNIQVEVLVPDFRGRMQVAIDILKGEAPDVFNHNLETVPRLYKAARPGANYQWSLDLLQKYKEVRPDIRTKSGLMVGLGETKEEILEVMKDLRAHDVDMLTIGQYLQPSRHHIPVARYVHPDEFEELRVAGVEMGFSHIASGPLVRSSYHADLQAAGETVR</sequence>
<proteinExistence type="inferred from homology"/>
<name>LIPA_IDILO</name>
<organism>
    <name type="scientific">Idiomarina loihiensis (strain ATCC BAA-735 / DSM 15497 / L2-TR)</name>
    <dbReference type="NCBI Taxonomy" id="283942"/>
    <lineage>
        <taxon>Bacteria</taxon>
        <taxon>Pseudomonadati</taxon>
        <taxon>Pseudomonadota</taxon>
        <taxon>Gammaproteobacteria</taxon>
        <taxon>Alteromonadales</taxon>
        <taxon>Idiomarinaceae</taxon>
        <taxon>Idiomarina</taxon>
    </lineage>
</organism>
<evidence type="ECO:0000255" key="1">
    <source>
        <dbReference type="HAMAP-Rule" id="MF_00206"/>
    </source>
</evidence>
<evidence type="ECO:0000255" key="2">
    <source>
        <dbReference type="PROSITE-ProRule" id="PRU01266"/>
    </source>
</evidence>
<evidence type="ECO:0000305" key="3"/>
<accession>Q5QYE5</accession>